<dbReference type="EMBL" id="AY741371">
    <property type="protein sequence ID" value="AAX13853.1"/>
    <property type="molecule type" value="Genomic_DNA"/>
</dbReference>
<dbReference type="RefSeq" id="YP_277354.1">
    <property type="nucleotide sequence ID" value="NC_007288.1"/>
</dbReference>
<dbReference type="SMR" id="Q4G3B3"/>
<dbReference type="STRING" id="2903.Q4G3B3"/>
<dbReference type="GeneID" id="3562427"/>
<dbReference type="GO" id="GO:0009535">
    <property type="term" value="C:chloroplast thylakoid membrane"/>
    <property type="evidence" value="ECO:0007669"/>
    <property type="project" value="UniProtKB-SubCell"/>
</dbReference>
<dbReference type="GO" id="GO:0009512">
    <property type="term" value="C:cytochrome b6f complex"/>
    <property type="evidence" value="ECO:0007669"/>
    <property type="project" value="InterPro"/>
</dbReference>
<dbReference type="GO" id="GO:0009055">
    <property type="term" value="F:electron transfer activity"/>
    <property type="evidence" value="ECO:0007669"/>
    <property type="project" value="UniProtKB-UniRule"/>
</dbReference>
<dbReference type="GO" id="GO:0015979">
    <property type="term" value="P:photosynthesis"/>
    <property type="evidence" value="ECO:0007669"/>
    <property type="project" value="UniProtKB-KW"/>
</dbReference>
<dbReference type="HAMAP" id="MF_00396">
    <property type="entry name" value="Cytb6_f_PetM"/>
    <property type="match status" value="1"/>
</dbReference>
<dbReference type="InterPro" id="IPR012595">
    <property type="entry name" value="PetM_cyt_b6/f_cplx_su7"/>
</dbReference>
<dbReference type="NCBIfam" id="NF008826">
    <property type="entry name" value="PRK11876.1-2"/>
    <property type="match status" value="1"/>
</dbReference>
<dbReference type="Pfam" id="PF08041">
    <property type="entry name" value="PetM"/>
    <property type="match status" value="1"/>
</dbReference>
<dbReference type="SUPFAM" id="SSF103441">
    <property type="entry name" value="PetM subunit of the cytochrome b6f complex"/>
    <property type="match status" value="1"/>
</dbReference>
<comment type="function">
    <text evidence="1">Component of the cytochrome b6-f complex, which mediates electron transfer between photosystem II (PSII) and photosystem I (PSI), cyclic electron flow around PSI, and state transitions.</text>
</comment>
<comment type="subunit">
    <text evidence="1">The 4 large subunits of the cytochrome b6-f complex are cytochrome b6, subunit IV (17 kDa polypeptide, PetD), cytochrome f and the Rieske protein, while the 4 small subunits are PetG, PetL, PetM and PetN. The complex functions as a dimer.</text>
</comment>
<comment type="subcellular location">
    <subcellularLocation>
        <location evidence="1">Plastid</location>
        <location evidence="1">Chloroplast thylakoid membrane</location>
        <topology evidence="1">Single-pass membrane protein</topology>
    </subcellularLocation>
</comment>
<comment type="similarity">
    <text evidence="1">Belongs to the PetM family.</text>
</comment>
<feature type="chain" id="PRO_0000233228" description="Cytochrome b6-f complex subunit 7">
    <location>
        <begin position="1"/>
        <end position="32"/>
    </location>
</feature>
<feature type="transmembrane region" description="Helical" evidence="1">
    <location>
        <begin position="5"/>
        <end position="25"/>
    </location>
</feature>
<name>PETM_EMIHU</name>
<organism>
    <name type="scientific">Emiliania huxleyi</name>
    <name type="common">Coccolithophore</name>
    <name type="synonym">Pontosphaera huxleyi</name>
    <dbReference type="NCBI Taxonomy" id="2903"/>
    <lineage>
        <taxon>Eukaryota</taxon>
        <taxon>Haptista</taxon>
        <taxon>Haptophyta</taxon>
        <taxon>Prymnesiophyceae</taxon>
        <taxon>Isochrysidales</taxon>
        <taxon>Noelaerhabdaceae</taxon>
        <taxon>Emiliania</taxon>
    </lineage>
</organism>
<sequence>MAKEIFTVAGVMWALVLTGLSVGFGLLKIQGE</sequence>
<reference key="1">
    <citation type="journal article" date="2005" name="DNA Res.">
        <title>The complete plastid genome sequence of the haptophyte Emiliania huxleyi: a comparison to other plastid genomes.</title>
        <authorList>
            <person name="Sanchez-Puerta M.V."/>
            <person name="Bachvaroff T.R."/>
            <person name="Delwiche C.F."/>
        </authorList>
    </citation>
    <scope>NUCLEOTIDE SEQUENCE [LARGE SCALE GENOMIC DNA]</scope>
    <source>
        <strain>CCMP373 / CSIRO-CS-57 / BT6</strain>
    </source>
</reference>
<keyword id="KW-0150">Chloroplast</keyword>
<keyword id="KW-0249">Electron transport</keyword>
<keyword id="KW-0472">Membrane</keyword>
<keyword id="KW-0602">Photosynthesis</keyword>
<keyword id="KW-0934">Plastid</keyword>
<keyword id="KW-0793">Thylakoid</keyword>
<keyword id="KW-0812">Transmembrane</keyword>
<keyword id="KW-1133">Transmembrane helix</keyword>
<keyword id="KW-0813">Transport</keyword>
<protein>
    <recommendedName>
        <fullName evidence="1">Cytochrome b6-f complex subunit 7</fullName>
    </recommendedName>
    <alternativeName>
        <fullName evidence="1">Cytochrome b6-f complex subunit PetM</fullName>
    </alternativeName>
    <alternativeName>
        <fullName evidence="1">Cytochrome b6-f complex subunit VII</fullName>
    </alternativeName>
</protein>
<evidence type="ECO:0000255" key="1">
    <source>
        <dbReference type="HAMAP-Rule" id="MF_00396"/>
    </source>
</evidence>
<gene>
    <name evidence="1" type="primary">petM</name>
</gene>
<geneLocation type="chloroplast"/>
<proteinExistence type="inferred from homology"/>
<accession>Q4G3B3</accession>